<organism>
    <name type="scientific">Cavia porcellus</name>
    <name type="common">Guinea pig</name>
    <dbReference type="NCBI Taxonomy" id="10141"/>
    <lineage>
        <taxon>Eukaryota</taxon>
        <taxon>Metazoa</taxon>
        <taxon>Chordata</taxon>
        <taxon>Craniata</taxon>
        <taxon>Vertebrata</taxon>
        <taxon>Euteleostomi</taxon>
        <taxon>Mammalia</taxon>
        <taxon>Eutheria</taxon>
        <taxon>Euarchontoglires</taxon>
        <taxon>Glires</taxon>
        <taxon>Rodentia</taxon>
        <taxon>Hystricomorpha</taxon>
        <taxon>Caviidae</taxon>
        <taxon>Cavia</taxon>
    </lineage>
</organism>
<protein>
    <recommendedName>
        <fullName>5-hydroxytryptamine receptor 1B</fullName>
        <shortName>5-HT-1B</shortName>
        <shortName>5-HT1B</shortName>
    </recommendedName>
    <alternativeName>
        <fullName>Serotonin receptor 1B</fullName>
    </alternativeName>
</protein>
<sequence length="389" mass="43111">MGNPEASCTPPAVLGSQTGLPHANVSAPPNNCSAPSHIYQDSIALPWKVLLVVLLALITLATTLSNAFVIATVYRTRKLHTPANYLIASLAFTDLLVSILVMPISTMYTVTGRWTLGQALCDFWLSSDITCCTASIMHLCVIALDRYWAITDAVGYSAKRTPRRAAGMIALVWVFSICISLPPFFWRQAKAEEEVLDCLVNTDHVLYTVYSTGGAFYLPTLLLIALYGRIYVEARSRILKQTPNKTGKRLTRAQLITDSPGSTSSVTSINSRAPEVPCDSGSPVYVNQVKVRVSDALLEKKKLMAARERKATKTLGVILGAFIVCWLPFFIISLVMPICKDACWFHMAIFDFFTWLGYLNSLINPIIYTMSNEDFKQAFHKLIRFKCTT</sequence>
<feature type="chain" id="PRO_0000068911" description="5-hydroxytryptamine receptor 1B">
    <location>
        <begin position="1"/>
        <end position="389"/>
    </location>
</feature>
<feature type="topological domain" description="Extracellular" evidence="1">
    <location>
        <begin position="1"/>
        <end position="45"/>
    </location>
</feature>
<feature type="transmembrane region" description="Helical; Name=1" evidence="1">
    <location>
        <begin position="46"/>
        <end position="71"/>
    </location>
</feature>
<feature type="topological domain" description="Cytoplasmic" evidence="1">
    <location>
        <begin position="72"/>
        <end position="85"/>
    </location>
</feature>
<feature type="transmembrane region" description="Helical; Name=2" evidence="1">
    <location>
        <begin position="86"/>
        <end position="110"/>
    </location>
</feature>
<feature type="topological domain" description="Extracellular" evidence="1">
    <location>
        <begin position="111"/>
        <end position="118"/>
    </location>
</feature>
<feature type="transmembrane region" description="Helical; Name=3" evidence="1">
    <location>
        <begin position="119"/>
        <end position="144"/>
    </location>
</feature>
<feature type="topological domain" description="Cytoplasmic" evidence="1">
    <location>
        <begin position="145"/>
        <end position="164"/>
    </location>
</feature>
<feature type="transmembrane region" description="Helical; Name=4" evidence="1">
    <location>
        <begin position="165"/>
        <end position="183"/>
    </location>
</feature>
<feature type="topological domain" description="Extracellular" evidence="1">
    <location>
        <begin position="184"/>
        <end position="204"/>
    </location>
</feature>
<feature type="transmembrane region" description="Helical; Name=5" evidence="1">
    <location>
        <begin position="205"/>
        <end position="228"/>
    </location>
</feature>
<feature type="topological domain" description="Cytoplasmic" evidence="1">
    <location>
        <begin position="229"/>
        <end position="314"/>
    </location>
</feature>
<feature type="transmembrane region" description="Helical; Name=6" evidence="1">
    <location>
        <begin position="315"/>
        <end position="336"/>
    </location>
</feature>
<feature type="topological domain" description="Extracellular" evidence="1">
    <location>
        <begin position="337"/>
        <end position="346"/>
    </location>
</feature>
<feature type="transmembrane region" description="Helical; Name=7" evidence="1">
    <location>
        <begin position="347"/>
        <end position="369"/>
    </location>
</feature>
<feature type="topological domain" description="Cytoplasmic" evidence="1">
    <location>
        <begin position="370"/>
        <end position="389"/>
    </location>
</feature>
<feature type="short sequence motif" description="DRY motif; important for ligand-induced conformation changes and signaling" evidence="2">
    <location>
        <begin position="145"/>
        <end position="147"/>
    </location>
</feature>
<feature type="short sequence motif" description="NPxxY motif; important for ligand-induced conformation changes and signaling" evidence="2">
    <location>
        <begin position="364"/>
        <end position="368"/>
    </location>
</feature>
<feature type="binding site" evidence="1">
    <location>
        <position position="128"/>
    </location>
    <ligand>
        <name>ergotamine</name>
        <dbReference type="ChEBI" id="CHEBI:190463"/>
        <note>agonist</note>
    </ligand>
</feature>
<feature type="binding site" evidence="1">
    <location>
        <position position="133"/>
    </location>
    <ligand>
        <name>ergotamine</name>
        <dbReference type="ChEBI" id="CHEBI:190463"/>
        <note>agonist</note>
    </ligand>
</feature>
<feature type="binding site" evidence="1">
    <location>
        <position position="200"/>
    </location>
    <ligand>
        <name>ergotamine</name>
        <dbReference type="ChEBI" id="CHEBI:190463"/>
        <note>agonist</note>
    </ligand>
</feature>
<feature type="site" description="Important for species-specific agonist sensitivity" evidence="1">
    <location>
        <position position="354"/>
    </location>
</feature>
<feature type="lipid moiety-binding region" description="S-palmitoyl cysteine" evidence="3">
    <location>
        <position position="387"/>
    </location>
</feature>
<feature type="glycosylation site" description="N-linked (GlcNAc...) asparagine" evidence="3">
    <location>
        <position position="24"/>
    </location>
</feature>
<feature type="glycosylation site" description="N-linked (GlcNAc...) asparagine" evidence="3">
    <location>
        <position position="31"/>
    </location>
</feature>
<feature type="disulfide bond" evidence="4">
    <location>
        <begin position="121"/>
        <end position="198"/>
    </location>
</feature>
<name>5HT1B_CAVPO</name>
<accession>O08892</accession>
<proteinExistence type="inferred from homology"/>
<keyword id="KW-0085">Behavior</keyword>
<keyword id="KW-1003">Cell membrane</keyword>
<keyword id="KW-1015">Disulfide bond</keyword>
<keyword id="KW-0297">G-protein coupled receptor</keyword>
<keyword id="KW-0325">Glycoprotein</keyword>
<keyword id="KW-0449">Lipoprotein</keyword>
<keyword id="KW-0472">Membrane</keyword>
<keyword id="KW-0564">Palmitate</keyword>
<keyword id="KW-0597">Phosphoprotein</keyword>
<keyword id="KW-0675">Receptor</keyword>
<keyword id="KW-1185">Reference proteome</keyword>
<keyword id="KW-0807">Transducer</keyword>
<keyword id="KW-0812">Transmembrane</keyword>
<keyword id="KW-1133">Transmembrane helix</keyword>
<comment type="function">
    <text evidence="1 5">G-protein coupled receptor for 5-hydroxytryptamine (serotonin) (PubMed:9225276). Also functions as a receptor for ergot alkaloid derivatives, various anxiolytic and antidepressant drugs and other psychoactive substances, such as lysergic acid diethylamide (LSD) (By similarity). Ligand binding causes a conformation change that triggers signaling via guanine nucleotide-binding proteins (G proteins) and modulates the activity of downstream effectors, such as adenylate cyclase (By similarity). HTR1B is coupled to G(i)/G(o) G alpha proteins and mediates inhibitory neurotransmission by inhibiting adenylate cyclase activity (By similarity). Arrestin family members inhibit signaling via G proteins and mediate activation of alternative signaling pathways (By similarity). Regulates the release of 5-hydroxytryptamine, dopamine and acetylcholine in the brain, and thereby affects neural activity, nociceptive processing, pain perception, mood and behavior (By similarity). Besides, plays a role in vasoconstriction of cerebral arteries (By similarity).</text>
</comment>
<comment type="subunit">
    <text evidence="1">Homodimer. Heterodimer with HTR1D.</text>
</comment>
<comment type="subcellular location">
    <subcellularLocation>
        <location evidence="5">Cell membrane</location>
        <topology evidence="3">Multi-pass membrane protein</topology>
    </subcellularLocation>
</comment>
<comment type="domain">
    <text evidence="1">Ligands are bound in a hydrophobic pocket formed by the transmembrane helices.</text>
</comment>
<comment type="domain">
    <text evidence="1">A residue in the 7th transmembrane region ('Thr-355' in human, 'Asn-351' in mouse and rat) is important for species-specific sensitivity to various agonists.</text>
</comment>
<comment type="PTM">
    <text evidence="1">Phosphorylated. Desensitization of the receptor may be mediated by its phosphorylation.</text>
</comment>
<comment type="PTM">
    <text evidence="1">Palmitoylated.</text>
</comment>
<comment type="similarity">
    <text evidence="4">Belongs to the G-protein coupled receptor 1 family.</text>
</comment>
<evidence type="ECO:0000250" key="1">
    <source>
        <dbReference type="UniProtKB" id="P28222"/>
    </source>
</evidence>
<evidence type="ECO:0000250" key="2">
    <source>
        <dbReference type="UniProtKB" id="P41595"/>
    </source>
</evidence>
<evidence type="ECO:0000255" key="3"/>
<evidence type="ECO:0000255" key="4">
    <source>
        <dbReference type="PROSITE-ProRule" id="PRU00521"/>
    </source>
</evidence>
<evidence type="ECO:0000269" key="5">
    <source>
    </source>
</evidence>
<dbReference type="EMBL" id="U82175">
    <property type="protein sequence ID" value="AAB58500.1"/>
    <property type="molecule type" value="Genomic_DNA"/>
</dbReference>
<dbReference type="RefSeq" id="XP_012997717.1">
    <property type="nucleotide sequence ID" value="XM_013142263.1"/>
</dbReference>
<dbReference type="SMR" id="O08892"/>
<dbReference type="FunCoup" id="O08892">
    <property type="interactions" value="735"/>
</dbReference>
<dbReference type="STRING" id="10141.ENSCPOP00000020641"/>
<dbReference type="BindingDB" id="O08892"/>
<dbReference type="ChEMBL" id="CHEMBL5169098"/>
<dbReference type="GlyCosmos" id="O08892">
    <property type="glycosylation" value="2 sites, No reported glycans"/>
</dbReference>
<dbReference type="Ensembl" id="ENSCPOT00000000104.3">
    <property type="protein sequence ID" value="ENSCPOP00000020641.1"/>
    <property type="gene ID" value="ENSCPOG00000000103.4"/>
</dbReference>
<dbReference type="KEGG" id="cpoc:100717602"/>
<dbReference type="VEuPathDB" id="HostDB:ENSCPOG00000000103"/>
<dbReference type="eggNOG" id="KOG3656">
    <property type="taxonomic scope" value="Eukaryota"/>
</dbReference>
<dbReference type="GeneTree" id="ENSGT01010000222287"/>
<dbReference type="HOGENOM" id="CLU_009579_11_1_1"/>
<dbReference type="InParanoid" id="O08892"/>
<dbReference type="OMA" id="RFRCCRA"/>
<dbReference type="OrthoDB" id="5956310at2759"/>
<dbReference type="TreeFam" id="TF316350"/>
<dbReference type="Proteomes" id="UP000005447">
    <property type="component" value="Unassembled WGS sequence"/>
</dbReference>
<dbReference type="Bgee" id="ENSCPOG00000000103">
    <property type="expression patterns" value="Expressed in frontal cortex and 5 other cell types or tissues"/>
</dbReference>
<dbReference type="GO" id="GO:0005783">
    <property type="term" value="C:endoplasmic reticulum"/>
    <property type="evidence" value="ECO:0007669"/>
    <property type="project" value="Ensembl"/>
</dbReference>
<dbReference type="GO" id="GO:0098666">
    <property type="term" value="C:G protein-coupled serotonin receptor complex"/>
    <property type="evidence" value="ECO:0007669"/>
    <property type="project" value="Ensembl"/>
</dbReference>
<dbReference type="GO" id="GO:0005886">
    <property type="term" value="C:plasma membrane"/>
    <property type="evidence" value="ECO:0000250"/>
    <property type="project" value="UniProtKB"/>
</dbReference>
<dbReference type="GO" id="GO:0042734">
    <property type="term" value="C:presynaptic membrane"/>
    <property type="evidence" value="ECO:0007669"/>
    <property type="project" value="Ensembl"/>
</dbReference>
<dbReference type="GO" id="GO:0099154">
    <property type="term" value="C:serotonergic synapse"/>
    <property type="evidence" value="ECO:0007669"/>
    <property type="project" value="Ensembl"/>
</dbReference>
<dbReference type="GO" id="GO:0004993">
    <property type="term" value="F:G protein-coupled serotonin receptor activity"/>
    <property type="evidence" value="ECO:0000250"/>
    <property type="project" value="UniProtKB"/>
</dbReference>
<dbReference type="GO" id="GO:0001586">
    <property type="term" value="F:Gi/o-coupled serotonin receptor activity"/>
    <property type="evidence" value="ECO:0007669"/>
    <property type="project" value="Ensembl"/>
</dbReference>
<dbReference type="GO" id="GO:0051378">
    <property type="term" value="F:serotonin binding"/>
    <property type="evidence" value="ECO:0007669"/>
    <property type="project" value="Ensembl"/>
</dbReference>
<dbReference type="GO" id="GO:0099589">
    <property type="term" value="F:serotonin receptor activity"/>
    <property type="evidence" value="ECO:0007669"/>
    <property type="project" value="Ensembl"/>
</dbReference>
<dbReference type="GO" id="GO:0071880">
    <property type="term" value="P:adenylate cyclase-activating adrenergic receptor signaling pathway"/>
    <property type="evidence" value="ECO:0007669"/>
    <property type="project" value="TreeGrafter"/>
</dbReference>
<dbReference type="GO" id="GO:0007198">
    <property type="term" value="P:adenylate cyclase-inhibiting serotonin receptor signaling pathway"/>
    <property type="evidence" value="ECO:0000250"/>
    <property type="project" value="UniProtKB"/>
</dbReference>
<dbReference type="GO" id="GO:0046849">
    <property type="term" value="P:bone remodeling"/>
    <property type="evidence" value="ECO:0007669"/>
    <property type="project" value="Ensembl"/>
</dbReference>
<dbReference type="GO" id="GO:0071312">
    <property type="term" value="P:cellular response to alkaloid"/>
    <property type="evidence" value="ECO:0000250"/>
    <property type="project" value="UniProtKB"/>
</dbReference>
<dbReference type="GO" id="GO:0071466">
    <property type="term" value="P:cellular response to xenobiotic stimulus"/>
    <property type="evidence" value="ECO:0000250"/>
    <property type="project" value="UniProtKB"/>
</dbReference>
<dbReference type="GO" id="GO:0007268">
    <property type="term" value="P:chemical synaptic transmission"/>
    <property type="evidence" value="ECO:0007669"/>
    <property type="project" value="InterPro"/>
</dbReference>
<dbReference type="GO" id="GO:0014063">
    <property type="term" value="P:negative regulation of serotonin secretion"/>
    <property type="evidence" value="ECO:0000250"/>
    <property type="project" value="UniProtKB"/>
</dbReference>
<dbReference type="GO" id="GO:0007208">
    <property type="term" value="P:phospholipase C-activating serotonin receptor signaling pathway"/>
    <property type="evidence" value="ECO:0007669"/>
    <property type="project" value="Ensembl"/>
</dbReference>
<dbReference type="GO" id="GO:0043410">
    <property type="term" value="P:positive regulation of MAPK cascade"/>
    <property type="evidence" value="ECO:0007669"/>
    <property type="project" value="TreeGrafter"/>
</dbReference>
<dbReference type="GO" id="GO:1904707">
    <property type="term" value="P:positive regulation of vascular associated smooth muscle cell proliferation"/>
    <property type="evidence" value="ECO:0007669"/>
    <property type="project" value="Ensembl"/>
</dbReference>
<dbReference type="GO" id="GO:0050795">
    <property type="term" value="P:regulation of behavior"/>
    <property type="evidence" value="ECO:0007669"/>
    <property type="project" value="InterPro"/>
</dbReference>
<dbReference type="GO" id="GO:0042310">
    <property type="term" value="P:vasoconstriction"/>
    <property type="evidence" value="ECO:0007669"/>
    <property type="project" value="InterPro"/>
</dbReference>
<dbReference type="CDD" id="cd15333">
    <property type="entry name" value="7tmA_5-HT1B_1D"/>
    <property type="match status" value="1"/>
</dbReference>
<dbReference type="Gene3D" id="1.20.1070.10">
    <property type="entry name" value="Rhodopsin 7-helix transmembrane proteins"/>
    <property type="match status" value="1"/>
</dbReference>
<dbReference type="InterPro" id="IPR002147">
    <property type="entry name" value="5HT1B_rcpt"/>
</dbReference>
<dbReference type="InterPro" id="IPR002231">
    <property type="entry name" value="5HT_rcpt"/>
</dbReference>
<dbReference type="InterPro" id="IPR000276">
    <property type="entry name" value="GPCR_Rhodpsn"/>
</dbReference>
<dbReference type="InterPro" id="IPR017452">
    <property type="entry name" value="GPCR_Rhodpsn_7TM"/>
</dbReference>
<dbReference type="PANTHER" id="PTHR24248:SF201">
    <property type="entry name" value="5-HYDROXYTRYPTAMINE RECEPTOR 1B"/>
    <property type="match status" value="1"/>
</dbReference>
<dbReference type="PANTHER" id="PTHR24248">
    <property type="entry name" value="ADRENERGIC RECEPTOR-RELATED G-PROTEIN COUPLED RECEPTOR"/>
    <property type="match status" value="1"/>
</dbReference>
<dbReference type="Pfam" id="PF00001">
    <property type="entry name" value="7tm_1"/>
    <property type="match status" value="1"/>
</dbReference>
<dbReference type="PRINTS" id="PR00513">
    <property type="entry name" value="5HT1BRECEPTR"/>
</dbReference>
<dbReference type="PRINTS" id="PR01101">
    <property type="entry name" value="5HTRECEPTOR"/>
</dbReference>
<dbReference type="PRINTS" id="PR00237">
    <property type="entry name" value="GPCRRHODOPSN"/>
</dbReference>
<dbReference type="SMART" id="SM01381">
    <property type="entry name" value="7TM_GPCR_Srsx"/>
    <property type="match status" value="1"/>
</dbReference>
<dbReference type="SUPFAM" id="SSF81321">
    <property type="entry name" value="Family A G protein-coupled receptor-like"/>
    <property type="match status" value="1"/>
</dbReference>
<dbReference type="PROSITE" id="PS00237">
    <property type="entry name" value="G_PROTEIN_RECEP_F1_1"/>
    <property type="match status" value="1"/>
</dbReference>
<dbReference type="PROSITE" id="PS50262">
    <property type="entry name" value="G_PROTEIN_RECEP_F1_2"/>
    <property type="match status" value="1"/>
</dbReference>
<reference key="1">
    <citation type="journal article" date="1997" name="Neuropharmacology">
        <title>Molecular cloning and pharmacological characterization of guinea pig 5-HT1B and 5-HT1D receptors.</title>
        <authorList>
            <person name="Zgombick J.M."/>
            <person name="Bard J.A."/>
            <person name="Kucharewicz S.A."/>
            <person name="Urquhart D.A."/>
            <person name="Weinshank R.L."/>
            <person name="Branchek T.A."/>
        </authorList>
    </citation>
    <scope>NUCLEOTIDE SEQUENCE [GENOMIC DNA]</scope>
    <scope>FUNCTION</scope>
    <scope>SUBCELLULAR LOCATION</scope>
    <source>
        <tissue>Liver</tissue>
    </source>
</reference>
<gene>
    <name type="primary">HTR1B</name>
</gene>